<feature type="chain" id="PRO_1000011891" description="Diaminopimelate epimerase">
    <location>
        <begin position="1"/>
        <end position="275"/>
    </location>
</feature>
<feature type="active site" description="Proton donor" evidence="1">
    <location>
        <position position="75"/>
    </location>
</feature>
<feature type="active site" description="Proton acceptor" evidence="1">
    <location>
        <position position="219"/>
    </location>
</feature>
<feature type="binding site" evidence="1">
    <location>
        <position position="13"/>
    </location>
    <ligand>
        <name>substrate</name>
    </ligand>
</feature>
<feature type="binding site" evidence="1">
    <location>
        <position position="46"/>
    </location>
    <ligand>
        <name>substrate</name>
    </ligand>
</feature>
<feature type="binding site" evidence="1">
    <location>
        <position position="66"/>
    </location>
    <ligand>
        <name>substrate</name>
    </ligand>
</feature>
<feature type="binding site" evidence="1">
    <location>
        <begin position="76"/>
        <end position="77"/>
    </location>
    <ligand>
        <name>substrate</name>
    </ligand>
</feature>
<feature type="binding site" evidence="1">
    <location>
        <position position="159"/>
    </location>
    <ligand>
        <name>substrate</name>
    </ligand>
</feature>
<feature type="binding site" evidence="1">
    <location>
        <position position="192"/>
    </location>
    <ligand>
        <name>substrate</name>
    </ligand>
</feature>
<feature type="binding site" evidence="1">
    <location>
        <begin position="210"/>
        <end position="211"/>
    </location>
    <ligand>
        <name>substrate</name>
    </ligand>
</feature>
<feature type="binding site" evidence="1">
    <location>
        <begin position="220"/>
        <end position="221"/>
    </location>
    <ligand>
        <name>substrate</name>
    </ligand>
</feature>
<feature type="site" description="Could be important to modulate the pK values of the two catalytic cysteine residues" evidence="1">
    <location>
        <position position="161"/>
    </location>
</feature>
<feature type="site" description="Could be important to modulate the pK values of the two catalytic cysteine residues" evidence="1">
    <location>
        <position position="210"/>
    </location>
</feature>
<feature type="site" description="Important for dimerization" evidence="1">
    <location>
        <position position="269"/>
    </location>
</feature>
<evidence type="ECO:0000255" key="1">
    <source>
        <dbReference type="HAMAP-Rule" id="MF_00197"/>
    </source>
</evidence>
<name>DAPF_IDILO</name>
<gene>
    <name evidence="1" type="primary">dapF</name>
    <name type="ordered locus">IL2555</name>
</gene>
<proteinExistence type="inferred from homology"/>
<reference key="1">
    <citation type="journal article" date="2004" name="Proc. Natl. Acad. Sci. U.S.A.">
        <title>Genome sequence of the deep-sea gamma-proteobacterium Idiomarina loihiensis reveals amino acid fermentation as a source of carbon and energy.</title>
        <authorList>
            <person name="Hou S."/>
            <person name="Saw J.H."/>
            <person name="Lee K.S."/>
            <person name="Freitas T.A."/>
            <person name="Belisle C."/>
            <person name="Kawarabayasi Y."/>
            <person name="Donachie S.P."/>
            <person name="Pikina A."/>
            <person name="Galperin M.Y."/>
            <person name="Koonin E.V."/>
            <person name="Makarova K.S."/>
            <person name="Omelchenko M.V."/>
            <person name="Sorokin A."/>
            <person name="Wolf Y.I."/>
            <person name="Li Q.X."/>
            <person name="Keum Y.S."/>
            <person name="Campbell S."/>
            <person name="Denery J."/>
            <person name="Aizawa S."/>
            <person name="Shibata S."/>
            <person name="Malahoff A."/>
            <person name="Alam M."/>
        </authorList>
    </citation>
    <scope>NUCLEOTIDE SEQUENCE [LARGE SCALE GENOMIC DNA]</scope>
    <source>
        <strain>ATCC BAA-735 / DSM 15497 / L2-TR</strain>
    </source>
</reference>
<dbReference type="EC" id="5.1.1.7" evidence="1"/>
<dbReference type="EMBL" id="AE017340">
    <property type="protein sequence ID" value="AAV83387.1"/>
    <property type="molecule type" value="Genomic_DNA"/>
</dbReference>
<dbReference type="RefSeq" id="WP_011235779.1">
    <property type="nucleotide sequence ID" value="NC_006512.1"/>
</dbReference>
<dbReference type="SMR" id="Q5QUS6"/>
<dbReference type="STRING" id="283942.IL2555"/>
<dbReference type="GeneID" id="41337749"/>
<dbReference type="KEGG" id="ilo:IL2555"/>
<dbReference type="eggNOG" id="COG0253">
    <property type="taxonomic scope" value="Bacteria"/>
</dbReference>
<dbReference type="HOGENOM" id="CLU_053306_1_1_6"/>
<dbReference type="OrthoDB" id="9805408at2"/>
<dbReference type="UniPathway" id="UPA00034">
    <property type="reaction ID" value="UER00025"/>
</dbReference>
<dbReference type="Proteomes" id="UP000001171">
    <property type="component" value="Chromosome"/>
</dbReference>
<dbReference type="GO" id="GO:0005829">
    <property type="term" value="C:cytosol"/>
    <property type="evidence" value="ECO:0007669"/>
    <property type="project" value="TreeGrafter"/>
</dbReference>
<dbReference type="GO" id="GO:0008837">
    <property type="term" value="F:diaminopimelate epimerase activity"/>
    <property type="evidence" value="ECO:0007669"/>
    <property type="project" value="UniProtKB-UniRule"/>
</dbReference>
<dbReference type="GO" id="GO:0009089">
    <property type="term" value="P:lysine biosynthetic process via diaminopimelate"/>
    <property type="evidence" value="ECO:0007669"/>
    <property type="project" value="UniProtKB-UniRule"/>
</dbReference>
<dbReference type="FunFam" id="3.10.310.10:FF:000001">
    <property type="entry name" value="Diaminopimelate epimerase"/>
    <property type="match status" value="1"/>
</dbReference>
<dbReference type="FunFam" id="3.10.310.10:FF:000002">
    <property type="entry name" value="Diaminopimelate epimerase"/>
    <property type="match status" value="1"/>
</dbReference>
<dbReference type="Gene3D" id="3.10.310.10">
    <property type="entry name" value="Diaminopimelate Epimerase, Chain A, domain 1"/>
    <property type="match status" value="2"/>
</dbReference>
<dbReference type="HAMAP" id="MF_00197">
    <property type="entry name" value="DAP_epimerase"/>
    <property type="match status" value="1"/>
</dbReference>
<dbReference type="InterPro" id="IPR018510">
    <property type="entry name" value="DAP_epimerase_AS"/>
</dbReference>
<dbReference type="InterPro" id="IPR001653">
    <property type="entry name" value="DAP_epimerase_DapF"/>
</dbReference>
<dbReference type="NCBIfam" id="TIGR00652">
    <property type="entry name" value="DapF"/>
    <property type="match status" value="1"/>
</dbReference>
<dbReference type="PANTHER" id="PTHR31689:SF0">
    <property type="entry name" value="DIAMINOPIMELATE EPIMERASE"/>
    <property type="match status" value="1"/>
</dbReference>
<dbReference type="PANTHER" id="PTHR31689">
    <property type="entry name" value="DIAMINOPIMELATE EPIMERASE, CHLOROPLASTIC"/>
    <property type="match status" value="1"/>
</dbReference>
<dbReference type="Pfam" id="PF01678">
    <property type="entry name" value="DAP_epimerase"/>
    <property type="match status" value="2"/>
</dbReference>
<dbReference type="SUPFAM" id="SSF54506">
    <property type="entry name" value="Diaminopimelate epimerase-like"/>
    <property type="match status" value="1"/>
</dbReference>
<dbReference type="PROSITE" id="PS01326">
    <property type="entry name" value="DAP_EPIMERASE"/>
    <property type="match status" value="1"/>
</dbReference>
<keyword id="KW-0028">Amino-acid biosynthesis</keyword>
<keyword id="KW-0963">Cytoplasm</keyword>
<keyword id="KW-0413">Isomerase</keyword>
<keyword id="KW-0457">Lysine biosynthesis</keyword>
<keyword id="KW-1185">Reference proteome</keyword>
<sequence>MLLHFSKMHGLGNDFMVVDNVTQNLYVNPDQIRRWADRHTGIGFDQMLLVEPPYDPDLDFHYRIFNADGSEVAQCGNGARCFAKFVKAKNLSNKNHLKVSTKAGKMVLHLEKDGQVTVDMGEPLFEPAAVPFKAQKAEQTYVLRVKEETVLCGVLGLGNPHCVIAVDNVDTTPVETLGAALAAHERFPESVNVGFMQKVSADEIKLRVFERGVGETRACGSGACAAAVAGIQQGLLNERVKVSLPGGDLIIRWQQGQPVKMTGPAELVYDGQMVL</sequence>
<comment type="function">
    <text evidence="1">Catalyzes the stereoinversion of LL-2,6-diaminopimelate (L,L-DAP) to meso-diaminopimelate (meso-DAP), a precursor of L-lysine and an essential component of the bacterial peptidoglycan.</text>
</comment>
<comment type="catalytic activity">
    <reaction evidence="1">
        <text>(2S,6S)-2,6-diaminopimelate = meso-2,6-diaminopimelate</text>
        <dbReference type="Rhea" id="RHEA:15393"/>
        <dbReference type="ChEBI" id="CHEBI:57609"/>
        <dbReference type="ChEBI" id="CHEBI:57791"/>
        <dbReference type="EC" id="5.1.1.7"/>
    </reaction>
</comment>
<comment type="pathway">
    <text evidence="1">Amino-acid biosynthesis; L-lysine biosynthesis via DAP pathway; DL-2,6-diaminopimelate from LL-2,6-diaminopimelate: step 1/1.</text>
</comment>
<comment type="subunit">
    <text evidence="1">Homodimer.</text>
</comment>
<comment type="subcellular location">
    <subcellularLocation>
        <location evidence="1">Cytoplasm</location>
    </subcellularLocation>
</comment>
<comment type="similarity">
    <text evidence="1">Belongs to the diaminopimelate epimerase family.</text>
</comment>
<accession>Q5QUS6</accession>
<organism>
    <name type="scientific">Idiomarina loihiensis (strain ATCC BAA-735 / DSM 15497 / L2-TR)</name>
    <dbReference type="NCBI Taxonomy" id="283942"/>
    <lineage>
        <taxon>Bacteria</taxon>
        <taxon>Pseudomonadati</taxon>
        <taxon>Pseudomonadota</taxon>
        <taxon>Gammaproteobacteria</taxon>
        <taxon>Alteromonadales</taxon>
        <taxon>Idiomarinaceae</taxon>
        <taxon>Idiomarina</taxon>
    </lineage>
</organism>
<protein>
    <recommendedName>
        <fullName evidence="1">Diaminopimelate epimerase</fullName>
        <shortName evidence="1">DAP epimerase</shortName>
        <ecNumber evidence="1">5.1.1.7</ecNumber>
    </recommendedName>
    <alternativeName>
        <fullName evidence="1">PLP-independent amino acid racemase</fullName>
    </alternativeName>
</protein>